<feature type="initiator methionine" description="Removed" evidence="1">
    <location>
        <position position="1"/>
    </location>
</feature>
<feature type="chain" id="PRO_0000122215" description="Small nuclear ribonucleoprotein Sm D3">
    <location>
        <begin position="2"/>
        <end position="126"/>
    </location>
</feature>
<feature type="domain" description="Sm" evidence="2">
    <location>
        <begin position="5"/>
        <end position="77"/>
    </location>
</feature>
<feature type="repeat" description="1">
    <location>
        <begin position="110"/>
        <end position="111"/>
    </location>
</feature>
<feature type="repeat" description="2">
    <location>
        <begin position="112"/>
        <end position="113"/>
    </location>
</feature>
<feature type="repeat" description="3">
    <location>
        <begin position="114"/>
        <end position="115"/>
    </location>
</feature>
<feature type="repeat" description="4">
    <location>
        <begin position="116"/>
        <end position="117"/>
    </location>
</feature>
<feature type="repeat" description="5">
    <location>
        <begin position="118"/>
        <end position="119"/>
    </location>
</feature>
<feature type="region of interest" description="5 X 2 AA tandem repeats of [RM]-G">
    <location>
        <begin position="110"/>
        <end position="119"/>
    </location>
</feature>
<feature type="modified residue" description="N-acetylserine" evidence="1">
    <location>
        <position position="2"/>
    </location>
</feature>
<comment type="function">
    <text evidence="1 3">Plays a role in pre-mRNA splicing as a core component of the spliceosomal U1, U2, U4 and U5 small nuclear ribonucleoproteins (snRNPs), the building blocks of the spliceosome. Component of both the pre-catalytic spliceosome B complex and activated spliceosome C complexes. As a component of the minor spliceosome, involved in the splicing of U12-type introns in pre-mRNAs (By similarity). As part of the U7 snRNP it is involved in histone pre-mRNA 3'-end processing (PubMed:19470752).</text>
</comment>
<comment type="subunit">
    <text evidence="1 3">Core component of the spliceosomal U1, U2, U4 and U5 small nuclear ribonucleoproteins (snRNPs), the building blocks of the spliceosome. Most spliceosomal snRNPs contain a common set of Sm proteins, SNRPB, SNRPD1, SNRPD2, SNRPD3, SNRPE, SNRPF and SNRPG that assemble in a heptameric protein ring on the Sm site of the small nuclear RNA to form the core snRNP. Component of the U1 snRNP. The U1 snRNP is composed of the U1 snRNA and the 7 core Sm proteins SNRPB, SNRPD1, SNRPD2, SNRPD3, SNRPE, SNRPF and SNRPG, and at least three U1 snRNP-specific proteins SNRNP70/U1-70K, SNRPA/U1-A and SNRPC/U1-C. Component of the U4/U6-U5 tri-snRNP complex composed of the U4, U6 and U5 snRNAs and at least PRPF3, PRPF4, PRPF6, PRPF8, PRPF31, SNRNP200, TXNL4A, SNRNP40, SNRPB, SNRPD1, SNRPD2, SNRPD3, SNRPE, SNRPF, SNRPG, DDX23, CD2BP2, PPIH, SNU13, EFTUD2, SART1 and USP39, plus LSM2, LSM3, LSM4, LSM5, LSM6, LSM7 and LSM8 (By similarity). Component of the U7 snRNP complex, or U7 Sm protein core complex, that is composed of the U7 snRNA and at least LSM10, LSM11, SNRPB, SNRPD3, SNRPE, SNRPF and SNRPG; the complex does not contain SNRPD1 and SNRPD2 (PubMed:19470752). Component of the minor spliceosome, which splices U12-type introns. Part of the SMN-Sm complex that contains SMN1, GEMIN2/SIP1, DDX20/GEMIN3, GEMIN4, GEMIN5, GEMIN6, GEMIN7, GEMIN8, STRAP/UNRIP and the Sm proteins SNRPB, SNRPD1, SNRPD2, SNRPD3, SNRPE, SNRPF and SNRPG; catalyzes core snRNPs assembly. Forms a 6S pICln-Sm complex composed of CLNS1A/pICln, SNRPD1, SNRPD2, SNRPE, SNRPF and SNRPG; ring-like structure where CLNS1A/pICln mimics additional Sm proteins and which is unable to assemble into the core snRNP. Interacts (via C-terminus) with SMN1 (via Tudor domain); the interaction is direct (By similarity).</text>
</comment>
<comment type="subcellular location">
    <subcellularLocation>
        <location evidence="1">Cytoplasm</location>
        <location evidence="1">Cytosol</location>
    </subcellularLocation>
    <subcellularLocation>
        <location evidence="3">Nucleus</location>
    </subcellularLocation>
    <text evidence="1">SMN-mediated assembly into core snRNPs occurs in the cytosol before SMN-mediated transport to the nucleus to be included in spliceosomes.</text>
</comment>
<comment type="PTM">
    <text evidence="1">Methylated on arginine residues by PRMT5 and PRMT7; probable asymmetric dimethylation which is required for assembly and biogenesis of snRNPs.</text>
</comment>
<comment type="similarity">
    <text evidence="4">Belongs to the snRNP core protein family.</text>
</comment>
<organism>
    <name type="scientific">Mus musculus</name>
    <name type="common">Mouse</name>
    <dbReference type="NCBI Taxonomy" id="10090"/>
    <lineage>
        <taxon>Eukaryota</taxon>
        <taxon>Metazoa</taxon>
        <taxon>Chordata</taxon>
        <taxon>Craniata</taxon>
        <taxon>Vertebrata</taxon>
        <taxon>Euteleostomi</taxon>
        <taxon>Mammalia</taxon>
        <taxon>Eutheria</taxon>
        <taxon>Euarchontoglires</taxon>
        <taxon>Glires</taxon>
        <taxon>Rodentia</taxon>
        <taxon>Myomorpha</taxon>
        <taxon>Muroidea</taxon>
        <taxon>Muridae</taxon>
        <taxon>Murinae</taxon>
        <taxon>Mus</taxon>
        <taxon>Mus</taxon>
    </lineage>
</organism>
<evidence type="ECO:0000250" key="1">
    <source>
        <dbReference type="UniProtKB" id="P62318"/>
    </source>
</evidence>
<evidence type="ECO:0000255" key="2">
    <source>
        <dbReference type="PROSITE-ProRule" id="PRU01346"/>
    </source>
</evidence>
<evidence type="ECO:0000269" key="3">
    <source>
    </source>
</evidence>
<evidence type="ECO:0000305" key="4"/>
<keyword id="KW-0007">Acetylation</keyword>
<keyword id="KW-0963">Cytoplasm</keyword>
<keyword id="KW-0488">Methylation</keyword>
<keyword id="KW-0507">mRNA processing</keyword>
<keyword id="KW-0508">mRNA splicing</keyword>
<keyword id="KW-0539">Nucleus</keyword>
<keyword id="KW-1185">Reference proteome</keyword>
<keyword id="KW-0677">Repeat</keyword>
<keyword id="KW-0687">Ribonucleoprotein</keyword>
<keyword id="KW-0694">RNA-binding</keyword>
<keyword id="KW-0747">Spliceosome</keyword>
<dbReference type="EMBL" id="AK005341">
    <property type="protein sequence ID" value="BAB23963.1"/>
    <property type="molecule type" value="mRNA"/>
</dbReference>
<dbReference type="EMBL" id="AK006692">
    <property type="protein sequence ID" value="BAB24705.1"/>
    <property type="molecule type" value="mRNA"/>
</dbReference>
<dbReference type="EMBL" id="AK019453">
    <property type="protein sequence ID" value="BAB31729.1"/>
    <property type="molecule type" value="mRNA"/>
</dbReference>
<dbReference type="EMBL" id="AK160321">
    <property type="protein sequence ID" value="BAE35738.1"/>
    <property type="molecule type" value="mRNA"/>
</dbReference>
<dbReference type="CCDS" id="CCDS23926.1"/>
<dbReference type="RefSeq" id="NP_080371.1">
    <property type="nucleotide sequence ID" value="NM_026095.5"/>
</dbReference>
<dbReference type="SMR" id="P62320"/>
<dbReference type="BioGRID" id="212112">
    <property type="interactions" value="77"/>
</dbReference>
<dbReference type="CORUM" id="P62320"/>
<dbReference type="FunCoup" id="P62320">
    <property type="interactions" value="3402"/>
</dbReference>
<dbReference type="IntAct" id="P62320">
    <property type="interactions" value="6"/>
</dbReference>
<dbReference type="MINT" id="P62320"/>
<dbReference type="STRING" id="10090.ENSMUSP00000020397"/>
<dbReference type="GlyGen" id="P62320">
    <property type="glycosylation" value="2 sites, 1 N-linked glycan (1 site), 1 O-linked glycan (1 site)"/>
</dbReference>
<dbReference type="iPTMnet" id="P62320"/>
<dbReference type="MetOSite" id="P62320"/>
<dbReference type="PhosphoSitePlus" id="P62320"/>
<dbReference type="SwissPalm" id="P62320"/>
<dbReference type="CPTAC" id="non-CPTAC-4012"/>
<dbReference type="jPOST" id="P62320"/>
<dbReference type="PaxDb" id="10090-ENSMUSP00000020397"/>
<dbReference type="PeptideAtlas" id="P62320"/>
<dbReference type="ProteomicsDB" id="261090"/>
<dbReference type="Pumba" id="P62320"/>
<dbReference type="DNASU" id="67332"/>
<dbReference type="Ensembl" id="ENSMUST00000020397.11">
    <property type="protein sequence ID" value="ENSMUSP00000020397.8"/>
    <property type="gene ID" value="ENSMUSG00000020180.11"/>
</dbReference>
<dbReference type="GeneID" id="67332"/>
<dbReference type="KEGG" id="mmu:67332"/>
<dbReference type="UCSC" id="uc007fqm.1">
    <property type="organism name" value="mouse"/>
</dbReference>
<dbReference type="AGR" id="MGI:1914582"/>
<dbReference type="CTD" id="6634"/>
<dbReference type="MGI" id="MGI:1914582">
    <property type="gene designation" value="Snrpd3"/>
</dbReference>
<dbReference type="VEuPathDB" id="HostDB:ENSMUSG00000020180"/>
<dbReference type="eggNOG" id="KOG3172">
    <property type="taxonomic scope" value="Eukaryota"/>
</dbReference>
<dbReference type="GeneTree" id="ENSGT00610000086153"/>
<dbReference type="HOGENOM" id="CLU_099537_1_0_1"/>
<dbReference type="InParanoid" id="P62320"/>
<dbReference type="OMA" id="HTITCET"/>
<dbReference type="OrthoDB" id="6425924at2759"/>
<dbReference type="PhylomeDB" id="P62320"/>
<dbReference type="TreeFam" id="TF354302"/>
<dbReference type="Reactome" id="R-MMU-111367">
    <property type="pathway name" value="SLBP independent Processing of Histone Pre-mRNAs"/>
</dbReference>
<dbReference type="Reactome" id="R-MMU-191859">
    <property type="pathway name" value="snRNP Assembly"/>
</dbReference>
<dbReference type="Reactome" id="R-MMU-72163">
    <property type="pathway name" value="mRNA Splicing - Major Pathway"/>
</dbReference>
<dbReference type="Reactome" id="R-MMU-72165">
    <property type="pathway name" value="mRNA Splicing - Minor Pathway"/>
</dbReference>
<dbReference type="Reactome" id="R-MMU-73856">
    <property type="pathway name" value="RNA Polymerase II Transcription Termination"/>
</dbReference>
<dbReference type="Reactome" id="R-MMU-77588">
    <property type="pathway name" value="SLBP Dependent Processing of Replication-Dependent Histone Pre-mRNAs"/>
</dbReference>
<dbReference type="BioGRID-ORCS" id="67332">
    <property type="hits" value="28 hits in 77 CRISPR screens"/>
</dbReference>
<dbReference type="CD-CODE" id="5E82D60E">
    <property type="entry name" value="Nucleolus"/>
</dbReference>
<dbReference type="ChiTaRS" id="Snrpd3">
    <property type="organism name" value="mouse"/>
</dbReference>
<dbReference type="PRO" id="PR:P62320"/>
<dbReference type="Proteomes" id="UP000000589">
    <property type="component" value="Chromosome 10"/>
</dbReference>
<dbReference type="RNAct" id="P62320">
    <property type="molecule type" value="protein"/>
</dbReference>
<dbReference type="Bgee" id="ENSMUSG00000020180">
    <property type="expression patterns" value="Expressed in floor plate of midbrain and 262 other cell types or tissues"/>
</dbReference>
<dbReference type="ExpressionAtlas" id="P62320">
    <property type="expression patterns" value="baseline and differential"/>
</dbReference>
<dbReference type="GO" id="GO:0005737">
    <property type="term" value="C:cytoplasm"/>
    <property type="evidence" value="ECO:0000314"/>
    <property type="project" value="MGI"/>
</dbReference>
<dbReference type="GO" id="GO:0005829">
    <property type="term" value="C:cytosol"/>
    <property type="evidence" value="ECO:0000250"/>
    <property type="project" value="UniProtKB"/>
</dbReference>
<dbReference type="GO" id="GO:0034709">
    <property type="term" value="C:methylosome"/>
    <property type="evidence" value="ECO:0000250"/>
    <property type="project" value="UniProtKB"/>
</dbReference>
<dbReference type="GO" id="GO:0016604">
    <property type="term" value="C:nuclear body"/>
    <property type="evidence" value="ECO:0007669"/>
    <property type="project" value="Ensembl"/>
</dbReference>
<dbReference type="GO" id="GO:0005634">
    <property type="term" value="C:nucleus"/>
    <property type="evidence" value="ECO:0000314"/>
    <property type="project" value="MGI"/>
</dbReference>
<dbReference type="GO" id="GO:0034715">
    <property type="term" value="C:pICln-Sm protein complex"/>
    <property type="evidence" value="ECO:0000250"/>
    <property type="project" value="UniProtKB"/>
</dbReference>
<dbReference type="GO" id="GO:0034719">
    <property type="term" value="C:SMN-Sm protein complex"/>
    <property type="evidence" value="ECO:0000250"/>
    <property type="project" value="UniProtKB"/>
</dbReference>
<dbReference type="GO" id="GO:0005697">
    <property type="term" value="C:telomerase holoenzyme complex"/>
    <property type="evidence" value="ECO:0007669"/>
    <property type="project" value="Ensembl"/>
</dbReference>
<dbReference type="GO" id="GO:0005685">
    <property type="term" value="C:U1 snRNP"/>
    <property type="evidence" value="ECO:0000250"/>
    <property type="project" value="UniProtKB"/>
</dbReference>
<dbReference type="GO" id="GO:0005689">
    <property type="term" value="C:U12-type spliceosomal complex"/>
    <property type="evidence" value="ECO:0007669"/>
    <property type="project" value="Ensembl"/>
</dbReference>
<dbReference type="GO" id="GO:0071007">
    <property type="term" value="C:U2-type catalytic step 2 spliceosome"/>
    <property type="evidence" value="ECO:0000250"/>
    <property type="project" value="UniProtKB"/>
</dbReference>
<dbReference type="GO" id="GO:0071005">
    <property type="term" value="C:U2-type precatalytic spliceosome"/>
    <property type="evidence" value="ECO:0000250"/>
    <property type="project" value="UniProtKB"/>
</dbReference>
<dbReference type="GO" id="GO:0005684">
    <property type="term" value="C:U2-type spliceosomal complex"/>
    <property type="evidence" value="ECO:0000250"/>
    <property type="project" value="UniProtKB"/>
</dbReference>
<dbReference type="GO" id="GO:0005687">
    <property type="term" value="C:U4 snRNP"/>
    <property type="evidence" value="ECO:0000250"/>
    <property type="project" value="UniProtKB"/>
</dbReference>
<dbReference type="GO" id="GO:0046540">
    <property type="term" value="C:U4/U6 x U5 tri-snRNP complex"/>
    <property type="evidence" value="ECO:0000250"/>
    <property type="project" value="UniProtKB"/>
</dbReference>
<dbReference type="GO" id="GO:0005683">
    <property type="term" value="C:U7 snRNP"/>
    <property type="evidence" value="ECO:0000250"/>
    <property type="project" value="UniProtKB"/>
</dbReference>
<dbReference type="GO" id="GO:0019899">
    <property type="term" value="F:enzyme binding"/>
    <property type="evidence" value="ECO:0007669"/>
    <property type="project" value="Ensembl"/>
</dbReference>
<dbReference type="GO" id="GO:0071208">
    <property type="term" value="F:histone pre-mRNA DCP binding"/>
    <property type="evidence" value="ECO:0000314"/>
    <property type="project" value="UniProtKB"/>
</dbReference>
<dbReference type="GO" id="GO:0070034">
    <property type="term" value="F:telomerase RNA binding"/>
    <property type="evidence" value="ECO:0007669"/>
    <property type="project" value="Ensembl"/>
</dbReference>
<dbReference type="GO" id="GO:0071209">
    <property type="term" value="F:U7 snRNA binding"/>
    <property type="evidence" value="ECO:0007669"/>
    <property type="project" value="Ensembl"/>
</dbReference>
<dbReference type="GO" id="GO:0000398">
    <property type="term" value="P:mRNA splicing, via spliceosome"/>
    <property type="evidence" value="ECO:0000250"/>
    <property type="project" value="UniProtKB"/>
</dbReference>
<dbReference type="GO" id="GO:0000387">
    <property type="term" value="P:spliceosomal snRNP assembly"/>
    <property type="evidence" value="ECO:0000250"/>
    <property type="project" value="UniProtKB"/>
</dbReference>
<dbReference type="CDD" id="cd01721">
    <property type="entry name" value="Sm_D3"/>
    <property type="match status" value="1"/>
</dbReference>
<dbReference type="FunFam" id="2.30.30.100:FF:000002">
    <property type="entry name" value="Small nuclear ribonucleoprotein Sm D3"/>
    <property type="match status" value="1"/>
</dbReference>
<dbReference type="Gene3D" id="2.30.30.100">
    <property type="match status" value="1"/>
</dbReference>
<dbReference type="InterPro" id="IPR027141">
    <property type="entry name" value="LSm4/Sm_D1/D3"/>
</dbReference>
<dbReference type="InterPro" id="IPR010920">
    <property type="entry name" value="LSM_dom_sf"/>
</dbReference>
<dbReference type="InterPro" id="IPR047575">
    <property type="entry name" value="Sm"/>
</dbReference>
<dbReference type="InterPro" id="IPR001163">
    <property type="entry name" value="Sm_dom_euk/arc"/>
</dbReference>
<dbReference type="InterPro" id="IPR034099">
    <property type="entry name" value="SmD3"/>
</dbReference>
<dbReference type="PANTHER" id="PTHR23338">
    <property type="entry name" value="SMALL NUCLEAR RIBONUCLEOPROTEIN SM"/>
    <property type="match status" value="1"/>
</dbReference>
<dbReference type="Pfam" id="PF01423">
    <property type="entry name" value="LSM"/>
    <property type="match status" value="1"/>
</dbReference>
<dbReference type="SMART" id="SM00651">
    <property type="entry name" value="Sm"/>
    <property type="match status" value="1"/>
</dbReference>
<dbReference type="SUPFAM" id="SSF50182">
    <property type="entry name" value="Sm-like ribonucleoproteins"/>
    <property type="match status" value="1"/>
</dbReference>
<dbReference type="PROSITE" id="PS52002">
    <property type="entry name" value="SM"/>
    <property type="match status" value="1"/>
</dbReference>
<reference key="1">
    <citation type="journal article" date="2005" name="Science">
        <title>The transcriptional landscape of the mammalian genome.</title>
        <authorList>
            <person name="Carninci P."/>
            <person name="Kasukawa T."/>
            <person name="Katayama S."/>
            <person name="Gough J."/>
            <person name="Frith M.C."/>
            <person name="Maeda N."/>
            <person name="Oyama R."/>
            <person name="Ravasi T."/>
            <person name="Lenhard B."/>
            <person name="Wells C."/>
            <person name="Kodzius R."/>
            <person name="Shimokawa K."/>
            <person name="Bajic V.B."/>
            <person name="Brenner S.E."/>
            <person name="Batalov S."/>
            <person name="Forrest A.R."/>
            <person name="Zavolan M."/>
            <person name="Davis M.J."/>
            <person name="Wilming L.G."/>
            <person name="Aidinis V."/>
            <person name="Allen J.E."/>
            <person name="Ambesi-Impiombato A."/>
            <person name="Apweiler R."/>
            <person name="Aturaliya R.N."/>
            <person name="Bailey T.L."/>
            <person name="Bansal M."/>
            <person name="Baxter L."/>
            <person name="Beisel K.W."/>
            <person name="Bersano T."/>
            <person name="Bono H."/>
            <person name="Chalk A.M."/>
            <person name="Chiu K.P."/>
            <person name="Choudhary V."/>
            <person name="Christoffels A."/>
            <person name="Clutterbuck D.R."/>
            <person name="Crowe M.L."/>
            <person name="Dalla E."/>
            <person name="Dalrymple B.P."/>
            <person name="de Bono B."/>
            <person name="Della Gatta G."/>
            <person name="di Bernardo D."/>
            <person name="Down T."/>
            <person name="Engstrom P."/>
            <person name="Fagiolini M."/>
            <person name="Faulkner G."/>
            <person name="Fletcher C.F."/>
            <person name="Fukushima T."/>
            <person name="Furuno M."/>
            <person name="Futaki S."/>
            <person name="Gariboldi M."/>
            <person name="Georgii-Hemming P."/>
            <person name="Gingeras T.R."/>
            <person name="Gojobori T."/>
            <person name="Green R.E."/>
            <person name="Gustincich S."/>
            <person name="Harbers M."/>
            <person name="Hayashi Y."/>
            <person name="Hensch T.K."/>
            <person name="Hirokawa N."/>
            <person name="Hill D."/>
            <person name="Huminiecki L."/>
            <person name="Iacono M."/>
            <person name="Ikeo K."/>
            <person name="Iwama A."/>
            <person name="Ishikawa T."/>
            <person name="Jakt M."/>
            <person name="Kanapin A."/>
            <person name="Katoh M."/>
            <person name="Kawasawa Y."/>
            <person name="Kelso J."/>
            <person name="Kitamura H."/>
            <person name="Kitano H."/>
            <person name="Kollias G."/>
            <person name="Krishnan S.P."/>
            <person name="Kruger A."/>
            <person name="Kummerfeld S.K."/>
            <person name="Kurochkin I.V."/>
            <person name="Lareau L.F."/>
            <person name="Lazarevic D."/>
            <person name="Lipovich L."/>
            <person name="Liu J."/>
            <person name="Liuni S."/>
            <person name="McWilliam S."/>
            <person name="Madan Babu M."/>
            <person name="Madera M."/>
            <person name="Marchionni L."/>
            <person name="Matsuda H."/>
            <person name="Matsuzawa S."/>
            <person name="Miki H."/>
            <person name="Mignone F."/>
            <person name="Miyake S."/>
            <person name="Morris K."/>
            <person name="Mottagui-Tabar S."/>
            <person name="Mulder N."/>
            <person name="Nakano N."/>
            <person name="Nakauchi H."/>
            <person name="Ng P."/>
            <person name="Nilsson R."/>
            <person name="Nishiguchi S."/>
            <person name="Nishikawa S."/>
            <person name="Nori F."/>
            <person name="Ohara O."/>
            <person name="Okazaki Y."/>
            <person name="Orlando V."/>
            <person name="Pang K.C."/>
            <person name="Pavan W.J."/>
            <person name="Pavesi G."/>
            <person name="Pesole G."/>
            <person name="Petrovsky N."/>
            <person name="Piazza S."/>
            <person name="Reed J."/>
            <person name="Reid J.F."/>
            <person name="Ring B.Z."/>
            <person name="Ringwald M."/>
            <person name="Rost B."/>
            <person name="Ruan Y."/>
            <person name="Salzberg S.L."/>
            <person name="Sandelin A."/>
            <person name="Schneider C."/>
            <person name="Schoenbach C."/>
            <person name="Sekiguchi K."/>
            <person name="Semple C.A."/>
            <person name="Seno S."/>
            <person name="Sessa L."/>
            <person name="Sheng Y."/>
            <person name="Shibata Y."/>
            <person name="Shimada H."/>
            <person name="Shimada K."/>
            <person name="Silva D."/>
            <person name="Sinclair B."/>
            <person name="Sperling S."/>
            <person name="Stupka E."/>
            <person name="Sugiura K."/>
            <person name="Sultana R."/>
            <person name="Takenaka Y."/>
            <person name="Taki K."/>
            <person name="Tammoja K."/>
            <person name="Tan S.L."/>
            <person name="Tang S."/>
            <person name="Taylor M.S."/>
            <person name="Tegner J."/>
            <person name="Teichmann S.A."/>
            <person name="Ueda H.R."/>
            <person name="van Nimwegen E."/>
            <person name="Verardo R."/>
            <person name="Wei C.L."/>
            <person name="Yagi K."/>
            <person name="Yamanishi H."/>
            <person name="Zabarovsky E."/>
            <person name="Zhu S."/>
            <person name="Zimmer A."/>
            <person name="Hide W."/>
            <person name="Bult C."/>
            <person name="Grimmond S.M."/>
            <person name="Teasdale R.D."/>
            <person name="Liu E.T."/>
            <person name="Brusic V."/>
            <person name="Quackenbush J."/>
            <person name="Wahlestedt C."/>
            <person name="Mattick J.S."/>
            <person name="Hume D.A."/>
            <person name="Kai C."/>
            <person name="Sasaki D."/>
            <person name="Tomaru Y."/>
            <person name="Fukuda S."/>
            <person name="Kanamori-Katayama M."/>
            <person name="Suzuki M."/>
            <person name="Aoki J."/>
            <person name="Arakawa T."/>
            <person name="Iida J."/>
            <person name="Imamura K."/>
            <person name="Itoh M."/>
            <person name="Kato T."/>
            <person name="Kawaji H."/>
            <person name="Kawagashira N."/>
            <person name="Kawashima T."/>
            <person name="Kojima M."/>
            <person name="Kondo S."/>
            <person name="Konno H."/>
            <person name="Nakano K."/>
            <person name="Ninomiya N."/>
            <person name="Nishio T."/>
            <person name="Okada M."/>
            <person name="Plessy C."/>
            <person name="Shibata K."/>
            <person name="Shiraki T."/>
            <person name="Suzuki S."/>
            <person name="Tagami M."/>
            <person name="Waki K."/>
            <person name="Watahiki A."/>
            <person name="Okamura-Oho Y."/>
            <person name="Suzuki H."/>
            <person name="Kawai J."/>
            <person name="Hayashizaki Y."/>
        </authorList>
    </citation>
    <scope>NUCLEOTIDE SEQUENCE [LARGE SCALE MRNA]</scope>
    <source>
        <strain>C57BL/6J</strain>
        <tissue>Cerebellum</tissue>
        <tissue>Head</tissue>
        <tissue>Lung</tissue>
        <tissue>Testis</tissue>
    </source>
</reference>
<reference key="2">
    <citation type="journal article" date="2009" name="Mol. Cell. Biol.">
        <title>Three proteins of the U7-specific Sm ring function as the molecular ruler to determine the site of 3'-end processing in mammalian histone pre-mRNA.</title>
        <authorList>
            <person name="Yang X.-C."/>
            <person name="Torres M.P."/>
            <person name="Marzluff W.F."/>
            <person name="Dominski Z."/>
        </authorList>
    </citation>
    <scope>FUNCTION</scope>
    <scope>RNA-BINDING</scope>
    <scope>SUBUNIT</scope>
    <scope>SUBCELLULAR LOCATION</scope>
</reference>
<reference key="3">
    <citation type="journal article" date="2010" name="Cell">
        <title>A tissue-specific atlas of mouse protein phosphorylation and expression.</title>
        <authorList>
            <person name="Huttlin E.L."/>
            <person name="Jedrychowski M.P."/>
            <person name="Elias J.E."/>
            <person name="Goswami T."/>
            <person name="Rad R."/>
            <person name="Beausoleil S.A."/>
            <person name="Villen J."/>
            <person name="Haas W."/>
            <person name="Sowa M.E."/>
            <person name="Gygi S.P."/>
        </authorList>
    </citation>
    <scope>IDENTIFICATION BY MASS SPECTROMETRY [LARGE SCALE ANALYSIS]</scope>
    <source>
        <tissue>Brain</tissue>
        <tissue>Brown adipose tissue</tissue>
        <tissue>Heart</tissue>
        <tissue>Kidney</tissue>
        <tissue>Liver</tissue>
        <tissue>Lung</tissue>
        <tissue>Pancreas</tissue>
        <tissue>Spleen</tissue>
        <tissue>Testis</tissue>
    </source>
</reference>
<protein>
    <recommendedName>
        <fullName>Small nuclear ribonucleoprotein Sm D3</fullName>
        <shortName>Sm-D3</shortName>
    </recommendedName>
    <alternativeName>
        <fullName>snRNP core protein D3</fullName>
    </alternativeName>
</protein>
<sequence>MSIGVPIKVLHEAEGHIVTCETNTGEVYRGKLIEAEDNMNCQMSNITVTYRDGRVAQLEQVYIRGSKIRFLILPDMLKNAPMLKSMKNKNQGSGAGRGKAAILKAQVAARGRGRGMGRGNIFQKRR</sequence>
<name>SMD3_MOUSE</name>
<accession>P62320</accession>
<accession>P43331</accession>
<accession>Q3TV81</accession>
<proteinExistence type="evidence at protein level"/>
<gene>
    <name type="primary">Snrpd3</name>
</gene>